<comment type="function">
    <text evidence="2">Forms a heterodimeric complex in conjunction with mei-1 which severs microtubules in vitro in an ATP-dependent manner. This activity may promote rapid reorganization of cellular microtubule arrays. May act to target mei-1 within the cell. Required specifically for meiotic spindle formation in the female germline.</text>
</comment>
<comment type="subunit">
    <text evidence="2">Interacts with mei-1.</text>
</comment>
<comment type="interaction">
    <interactant intactId="EBI-323243">
        <id>O44740</id>
    </interactant>
    <interactant intactId="EBI-323248">
        <id>P34808</id>
        <label>mei-1</label>
    </interactant>
    <organismsDiffer>false</organismsDiffer>
    <experiments>3</experiments>
</comment>
<comment type="subcellular location">
    <subcellularLocation>
        <location evidence="2">Cytoplasm</location>
        <location evidence="2">Cytoskeleton</location>
        <location evidence="2">Spindle pole</location>
    </subcellularLocation>
    <text>Localized to the spindle poles and condensed chromatin during female meiosis. Also localized to the polar body. Correct localization requires mei-1.</text>
</comment>
<comment type="developmental stage">
    <text evidence="2">Highly expressed in the female germline.</text>
</comment>
<accession>O44740</accession>
<keyword id="KW-0131">Cell cycle</keyword>
<keyword id="KW-0132">Cell division</keyword>
<keyword id="KW-0963">Cytoplasm</keyword>
<keyword id="KW-0206">Cytoskeleton</keyword>
<keyword id="KW-0469">Meiosis</keyword>
<keyword id="KW-0493">Microtubule</keyword>
<keyword id="KW-1185">Reference proteome</keyword>
<protein>
    <recommendedName>
        <fullName>Meiotic spindle formation protein 2</fullName>
    </recommendedName>
</protein>
<name>MEI2_CAEEL</name>
<organism>
    <name type="scientific">Caenorhabditis elegans</name>
    <dbReference type="NCBI Taxonomy" id="6239"/>
    <lineage>
        <taxon>Eukaryota</taxon>
        <taxon>Metazoa</taxon>
        <taxon>Ecdysozoa</taxon>
        <taxon>Nematoda</taxon>
        <taxon>Chromadorea</taxon>
        <taxon>Rhabditida</taxon>
        <taxon>Rhabditina</taxon>
        <taxon>Rhabditomorpha</taxon>
        <taxon>Rhabditoidea</taxon>
        <taxon>Rhabditidae</taxon>
        <taxon>Peloderinae</taxon>
        <taxon>Caenorhabditis</taxon>
    </lineage>
</organism>
<dbReference type="EMBL" id="AF248052">
    <property type="protein sequence ID" value="AAF62184.1"/>
    <property type="molecule type" value="mRNA"/>
</dbReference>
<dbReference type="EMBL" id="FO081416">
    <property type="protein sequence ID" value="CCD71480.1"/>
    <property type="molecule type" value="Genomic_DNA"/>
</dbReference>
<dbReference type="PIR" id="T32747">
    <property type="entry name" value="T32747"/>
</dbReference>
<dbReference type="RefSeq" id="NP_491894.1">
    <property type="nucleotide sequence ID" value="NM_059493.8"/>
</dbReference>
<dbReference type="SMR" id="O44740"/>
<dbReference type="BioGRID" id="37825">
    <property type="interactions" value="16"/>
</dbReference>
<dbReference type="ComplexPortal" id="CPX-3889">
    <property type="entry name" value="Katanin complex"/>
</dbReference>
<dbReference type="DIP" id="DIP-27215N"/>
<dbReference type="FunCoup" id="O44740">
    <property type="interactions" value="795"/>
</dbReference>
<dbReference type="IntAct" id="O44740">
    <property type="interactions" value="4"/>
</dbReference>
<dbReference type="STRING" id="6239.F57B10.12.1"/>
<dbReference type="PaxDb" id="6239-F57B10.12"/>
<dbReference type="PeptideAtlas" id="O44740"/>
<dbReference type="EnsemblMetazoa" id="F57B10.12.1">
    <property type="protein sequence ID" value="F57B10.12.1"/>
    <property type="gene ID" value="WBGene00003184"/>
</dbReference>
<dbReference type="GeneID" id="172374"/>
<dbReference type="KEGG" id="cel:CELE_F57B10.12"/>
<dbReference type="UCSC" id="F57B10.12">
    <property type="organism name" value="c. elegans"/>
</dbReference>
<dbReference type="AGR" id="WB:WBGene00003184"/>
<dbReference type="CTD" id="172374"/>
<dbReference type="WormBase" id="F57B10.12">
    <property type="protein sequence ID" value="CE11320"/>
    <property type="gene ID" value="WBGene00003184"/>
    <property type="gene designation" value="mei-2"/>
</dbReference>
<dbReference type="HOGENOM" id="CLU_1016461_0_0_1"/>
<dbReference type="InParanoid" id="O44740"/>
<dbReference type="OMA" id="ENKYIRR"/>
<dbReference type="OrthoDB" id="10251605at2759"/>
<dbReference type="PhylomeDB" id="O44740"/>
<dbReference type="PRO" id="PR:O44740"/>
<dbReference type="Proteomes" id="UP000001940">
    <property type="component" value="Chromosome I"/>
</dbReference>
<dbReference type="Bgee" id="WBGene00003184">
    <property type="expression patterns" value="Expressed in germ line (C elegans) and 3 other cell types or tissues"/>
</dbReference>
<dbReference type="GO" id="GO:0000794">
    <property type="term" value="C:condensed nuclear chromosome"/>
    <property type="evidence" value="ECO:0000314"/>
    <property type="project" value="WormBase"/>
</dbReference>
<dbReference type="GO" id="GO:0005737">
    <property type="term" value="C:cytoplasm"/>
    <property type="evidence" value="ECO:0000314"/>
    <property type="project" value="WormBase"/>
</dbReference>
<dbReference type="GO" id="GO:0008352">
    <property type="term" value="C:katanin complex"/>
    <property type="evidence" value="ECO:0000314"/>
    <property type="project" value="WormBase"/>
</dbReference>
<dbReference type="GO" id="GO:0001940">
    <property type="term" value="C:male pronucleus"/>
    <property type="evidence" value="ECO:0000314"/>
    <property type="project" value="WormBase"/>
</dbReference>
<dbReference type="GO" id="GO:0005874">
    <property type="term" value="C:microtubule"/>
    <property type="evidence" value="ECO:0007669"/>
    <property type="project" value="UniProtKB-KW"/>
</dbReference>
<dbReference type="GO" id="GO:0000922">
    <property type="term" value="C:spindle pole"/>
    <property type="evidence" value="ECO:0000314"/>
    <property type="project" value="WormBase"/>
</dbReference>
<dbReference type="GO" id="GO:0051301">
    <property type="term" value="P:cell division"/>
    <property type="evidence" value="ECO:0007669"/>
    <property type="project" value="UniProtKB-KW"/>
</dbReference>
<dbReference type="GO" id="GO:0009792">
    <property type="term" value="P:embryo development ending in birth or egg hatching"/>
    <property type="evidence" value="ECO:0000315"/>
    <property type="project" value="WormBase"/>
</dbReference>
<dbReference type="GO" id="GO:0051229">
    <property type="term" value="P:meiotic spindle disassembly"/>
    <property type="evidence" value="ECO:0000303"/>
    <property type="project" value="ComplexPortal"/>
</dbReference>
<dbReference type="GO" id="GO:0000212">
    <property type="term" value="P:meiotic spindle organization"/>
    <property type="evidence" value="ECO:0000315"/>
    <property type="project" value="WormBase"/>
</dbReference>
<dbReference type="GO" id="GO:0007019">
    <property type="term" value="P:microtubule depolymerization"/>
    <property type="evidence" value="ECO:0000314"/>
    <property type="project" value="WormBase"/>
</dbReference>
<sequence length="280" mass="31458">MSGLDDRKKLTHAKNRKPLNDIPKSAENRPNTRSTSSRRGAEKDVPITFIGSSRTVKADLPEFTNTRSRRPLHSESKKELSRNPVSRGEEHSSSLPKSSPESSVSVMSSNASLWSACTEEVNKIGVCAKRESRNLRVYKMKSFTSNMEQILSNDNQLAPTVIRILNSRNSWCLNSCHACLTFIMENITSDNYGKRSACLKALASITNSLLDTIIGFASTKTRRIGVDVVAEERAAKATECIHNFRKIVKNRDKIYKQIDQETIYKLDAILERLKKVSSHK</sequence>
<evidence type="ECO:0000256" key="1">
    <source>
        <dbReference type="SAM" id="MobiDB-lite"/>
    </source>
</evidence>
<evidence type="ECO:0000269" key="2">
    <source>
    </source>
</evidence>
<feature type="chain" id="PRO_0000096400" description="Meiotic spindle formation protein 2">
    <location>
        <begin position="1"/>
        <end position="280"/>
    </location>
</feature>
<feature type="region of interest" description="Disordered" evidence="1">
    <location>
        <begin position="1"/>
        <end position="104"/>
    </location>
</feature>
<feature type="compositionally biased region" description="Basic and acidic residues" evidence="1">
    <location>
        <begin position="72"/>
        <end position="92"/>
    </location>
</feature>
<feature type="compositionally biased region" description="Low complexity" evidence="1">
    <location>
        <begin position="93"/>
        <end position="104"/>
    </location>
</feature>
<gene>
    <name type="primary">mei-2</name>
    <name type="ORF">F57B10.12</name>
</gene>
<reference key="1">
    <citation type="journal article" date="2000" name="Genes Dev.">
        <title>MEI-1/MEI-2 katanin-like microtubule severing activity is required for Caenorhabditis elegans meiosis.</title>
        <authorList>
            <person name="Srayko M."/>
            <person name="Buster D.W."/>
            <person name="Bazirgan O.A."/>
            <person name="McNally F.J."/>
            <person name="Mains P.E."/>
        </authorList>
    </citation>
    <scope>NUCLEOTIDE SEQUENCE [MRNA]</scope>
    <scope>FUNCTION</scope>
    <scope>DEVELOPMENTAL STAGE</scope>
    <scope>SUBCELLULAR LOCATION</scope>
    <scope>INTERACTION WITH MEI-1</scope>
</reference>
<reference key="2">
    <citation type="journal article" date="1998" name="Science">
        <title>Genome sequence of the nematode C. elegans: a platform for investigating biology.</title>
        <authorList>
            <consortium name="The C. elegans sequencing consortium"/>
        </authorList>
    </citation>
    <scope>NUCLEOTIDE SEQUENCE [LARGE SCALE GENOMIC DNA]</scope>
    <source>
        <strain>Bristol N2</strain>
    </source>
</reference>
<proteinExistence type="evidence at protein level"/>